<organism>
    <name type="scientific">Serratia proteamaculans (strain 568)</name>
    <dbReference type="NCBI Taxonomy" id="399741"/>
    <lineage>
        <taxon>Bacteria</taxon>
        <taxon>Pseudomonadati</taxon>
        <taxon>Pseudomonadota</taxon>
        <taxon>Gammaproteobacteria</taxon>
        <taxon>Enterobacterales</taxon>
        <taxon>Yersiniaceae</taxon>
        <taxon>Serratia</taxon>
    </lineage>
</organism>
<gene>
    <name evidence="1" type="primary">secB</name>
    <name type="ordered locus">Spro_4816</name>
</gene>
<feature type="chain" id="PRO_1000062515" description="Protein-export protein SecB">
    <location>
        <begin position="1"/>
        <end position="156"/>
    </location>
</feature>
<comment type="function">
    <text evidence="1">One of the proteins required for the normal export of preproteins out of the cell cytoplasm. It is a molecular chaperone that binds to a subset of precursor proteins, maintaining them in a translocation-competent state. It also specifically binds to its receptor SecA.</text>
</comment>
<comment type="subunit">
    <text evidence="1">Homotetramer, a dimer of dimers. One homotetramer interacts with 1 SecA dimer.</text>
</comment>
<comment type="subcellular location">
    <subcellularLocation>
        <location evidence="1">Cytoplasm</location>
    </subcellularLocation>
</comment>
<comment type="similarity">
    <text evidence="1">Belongs to the SecB family.</text>
</comment>
<reference key="1">
    <citation type="submission" date="2007-09" db="EMBL/GenBank/DDBJ databases">
        <title>Complete sequence of chromosome of Serratia proteamaculans 568.</title>
        <authorList>
            <consortium name="US DOE Joint Genome Institute"/>
            <person name="Copeland A."/>
            <person name="Lucas S."/>
            <person name="Lapidus A."/>
            <person name="Barry K."/>
            <person name="Glavina del Rio T."/>
            <person name="Dalin E."/>
            <person name="Tice H."/>
            <person name="Pitluck S."/>
            <person name="Chain P."/>
            <person name="Malfatti S."/>
            <person name="Shin M."/>
            <person name="Vergez L."/>
            <person name="Schmutz J."/>
            <person name="Larimer F."/>
            <person name="Land M."/>
            <person name="Hauser L."/>
            <person name="Kyrpides N."/>
            <person name="Kim E."/>
            <person name="Taghavi S."/>
            <person name="Newman L."/>
            <person name="Vangronsveld J."/>
            <person name="van der Lelie D."/>
            <person name="Richardson P."/>
        </authorList>
    </citation>
    <scope>NUCLEOTIDE SEQUENCE [LARGE SCALE GENOMIC DNA]</scope>
    <source>
        <strain>568</strain>
    </source>
</reference>
<keyword id="KW-0143">Chaperone</keyword>
<keyword id="KW-0963">Cytoplasm</keyword>
<keyword id="KW-0653">Protein transport</keyword>
<keyword id="KW-0811">Translocation</keyword>
<keyword id="KW-0813">Transport</keyword>
<proteinExistence type="inferred from homology"/>
<sequence length="156" mass="17228">MSEQNSTEMAFQIQRIYTKDISFEAPKAPQVFQQEWQPEVKLDLDTASSQLADEVYEVVLRVTVTASLGEETAFLCEVQQAGIFSVAGIDGTQLAHCLGAYCPNILFPYARECITSLVSRGTFPQLNLAPVNFDALFMNYLQQQSEGEGAAPHQDA</sequence>
<protein>
    <recommendedName>
        <fullName evidence="1">Protein-export protein SecB</fullName>
    </recommendedName>
</protein>
<name>SECB_SERP5</name>
<accession>A8GLB9</accession>
<dbReference type="EMBL" id="CP000826">
    <property type="protein sequence ID" value="ABV43909.1"/>
    <property type="molecule type" value="Genomic_DNA"/>
</dbReference>
<dbReference type="SMR" id="A8GLB9"/>
<dbReference type="STRING" id="399741.Spro_4816"/>
<dbReference type="KEGG" id="spe:Spro_4816"/>
<dbReference type="eggNOG" id="COG1952">
    <property type="taxonomic scope" value="Bacteria"/>
</dbReference>
<dbReference type="HOGENOM" id="CLU_111574_1_0_6"/>
<dbReference type="OrthoDB" id="9795145at2"/>
<dbReference type="GO" id="GO:0005737">
    <property type="term" value="C:cytoplasm"/>
    <property type="evidence" value="ECO:0007669"/>
    <property type="project" value="UniProtKB-SubCell"/>
</dbReference>
<dbReference type="GO" id="GO:0051082">
    <property type="term" value="F:unfolded protein binding"/>
    <property type="evidence" value="ECO:0007669"/>
    <property type="project" value="InterPro"/>
</dbReference>
<dbReference type="GO" id="GO:0006457">
    <property type="term" value="P:protein folding"/>
    <property type="evidence" value="ECO:0007669"/>
    <property type="project" value="UniProtKB-UniRule"/>
</dbReference>
<dbReference type="GO" id="GO:0051262">
    <property type="term" value="P:protein tetramerization"/>
    <property type="evidence" value="ECO:0007669"/>
    <property type="project" value="InterPro"/>
</dbReference>
<dbReference type="GO" id="GO:0015031">
    <property type="term" value="P:protein transport"/>
    <property type="evidence" value="ECO:0007669"/>
    <property type="project" value="UniProtKB-UniRule"/>
</dbReference>
<dbReference type="CDD" id="cd00557">
    <property type="entry name" value="Translocase_SecB"/>
    <property type="match status" value="1"/>
</dbReference>
<dbReference type="FunFam" id="3.10.420.10:FF:000001">
    <property type="entry name" value="Protein-export chaperone SecB"/>
    <property type="match status" value="1"/>
</dbReference>
<dbReference type="Gene3D" id="3.10.420.10">
    <property type="entry name" value="SecB-like"/>
    <property type="match status" value="1"/>
</dbReference>
<dbReference type="HAMAP" id="MF_00821">
    <property type="entry name" value="SecB"/>
    <property type="match status" value="1"/>
</dbReference>
<dbReference type="InterPro" id="IPR003708">
    <property type="entry name" value="SecB"/>
</dbReference>
<dbReference type="InterPro" id="IPR035958">
    <property type="entry name" value="SecB-like_sf"/>
</dbReference>
<dbReference type="NCBIfam" id="NF004390">
    <property type="entry name" value="PRK05751.1-1"/>
    <property type="match status" value="1"/>
</dbReference>
<dbReference type="NCBIfam" id="NF004393">
    <property type="entry name" value="PRK05751.1-4"/>
    <property type="match status" value="1"/>
</dbReference>
<dbReference type="NCBIfam" id="TIGR00809">
    <property type="entry name" value="secB"/>
    <property type="match status" value="1"/>
</dbReference>
<dbReference type="PANTHER" id="PTHR36918">
    <property type="match status" value="1"/>
</dbReference>
<dbReference type="PANTHER" id="PTHR36918:SF1">
    <property type="entry name" value="PROTEIN-EXPORT PROTEIN SECB"/>
    <property type="match status" value="1"/>
</dbReference>
<dbReference type="Pfam" id="PF02556">
    <property type="entry name" value="SecB"/>
    <property type="match status" value="1"/>
</dbReference>
<dbReference type="PRINTS" id="PR01594">
    <property type="entry name" value="SECBCHAPRONE"/>
</dbReference>
<dbReference type="SUPFAM" id="SSF54611">
    <property type="entry name" value="SecB-like"/>
    <property type="match status" value="1"/>
</dbReference>
<evidence type="ECO:0000255" key="1">
    <source>
        <dbReference type="HAMAP-Rule" id="MF_00821"/>
    </source>
</evidence>